<proteinExistence type="inferred from homology"/>
<feature type="chain" id="PRO_0000358667" description="NADH-quinone oxidoreductase subunit C/D">
    <location>
        <begin position="1"/>
        <end position="593"/>
    </location>
</feature>
<feature type="region of interest" description="NADH dehydrogenase I subunit C" evidence="1">
    <location>
        <begin position="1"/>
        <end position="184"/>
    </location>
</feature>
<feature type="region of interest" description="NADH dehydrogenase I subunit D" evidence="1">
    <location>
        <begin position="208"/>
        <end position="593"/>
    </location>
</feature>
<organism>
    <name type="scientific">Pseudomonas syringae pv. tomato (strain ATCC BAA-871 / DC3000)</name>
    <dbReference type="NCBI Taxonomy" id="223283"/>
    <lineage>
        <taxon>Bacteria</taxon>
        <taxon>Pseudomonadati</taxon>
        <taxon>Pseudomonadota</taxon>
        <taxon>Gammaproteobacteria</taxon>
        <taxon>Pseudomonadales</taxon>
        <taxon>Pseudomonadaceae</taxon>
        <taxon>Pseudomonas</taxon>
    </lineage>
</organism>
<keyword id="KW-0997">Cell inner membrane</keyword>
<keyword id="KW-1003">Cell membrane</keyword>
<keyword id="KW-0472">Membrane</keyword>
<keyword id="KW-0511">Multifunctional enzyme</keyword>
<keyword id="KW-0520">NAD</keyword>
<keyword id="KW-0874">Quinone</keyword>
<keyword id="KW-1185">Reference proteome</keyword>
<keyword id="KW-1278">Translocase</keyword>
<keyword id="KW-0813">Transport</keyword>
<keyword id="KW-0830">Ubiquinone</keyword>
<sequence length="593" mass="67797">MTADNALYIPPYKADDQDVVVELNNRFGAEAFTAQPTRTGMPVLWVERARLFEILTFLRNVPKPYSMLYDLHGVDERLRTNRRGLPGADFTVFYHLLSIERNSDVMIKVALSESDLSVPTITSIWPNANWYEREVWDMFGIDFPGHPHLSRIMMPPTWEGHPLRKDFPARATEFDPYSLTLAKQQLEEEAARFRPEDWGMKRSGQNEDYMFLNLGPNHPSAHGAFRIILQLDGEEIVDCVPDIGYHHRGAEKMAERQSWHSFIPYTDRIDYLGGVMNNLPYVLSVEKLAGIKVPEKVDVIRIMMAEFFRITSHLLFLGTYIQDVGAMTPVFFTFTDRQKAYTVIEAITGFRLHPAWYRIGGVAHDLPRGWEKLVKDFVDWLPKRLDEYTKAALQNSILKGRTVGVAAYNTKEALEWGVTGAGLRSTGCDFDLRKARPYSGYENFEFEVPLAANGDAYDRCMVRVEEMRQSIKIIDQCMRNMPEGPYKADHPLTTPPPKERTLQHIETLITHFLQVSWGPVMPANESFQMIEATKGINSYYLTSDGGTMSYRTRIRTPSFPHLQQIPSVIQGSMVADLIAYLGSIDFVMADVDR</sequence>
<comment type="function">
    <text evidence="1">NDH-1 shuttles electrons from NADH, via FMN and iron-sulfur (Fe-S) centers, to quinones in the respiratory chain. The immediate electron acceptor for the enzyme in this species is believed to be ubiquinone. Couples the redox reaction to proton translocation (for every two electrons transferred, four hydrogen ions are translocated across the cytoplasmic membrane), and thus conserves the redox energy in a proton gradient.</text>
</comment>
<comment type="catalytic activity">
    <reaction evidence="1">
        <text>a quinone + NADH + 5 H(+)(in) = a quinol + NAD(+) + 4 H(+)(out)</text>
        <dbReference type="Rhea" id="RHEA:57888"/>
        <dbReference type="ChEBI" id="CHEBI:15378"/>
        <dbReference type="ChEBI" id="CHEBI:24646"/>
        <dbReference type="ChEBI" id="CHEBI:57540"/>
        <dbReference type="ChEBI" id="CHEBI:57945"/>
        <dbReference type="ChEBI" id="CHEBI:132124"/>
    </reaction>
</comment>
<comment type="subunit">
    <text evidence="1">NDH-1 is composed of 13 different subunits. Subunits NuoB, CD, E, F, and G constitute the peripheral sector of the complex.</text>
</comment>
<comment type="subcellular location">
    <subcellularLocation>
        <location evidence="1">Cell inner membrane</location>
        <topology evidence="1">Peripheral membrane protein</topology>
        <orientation evidence="1">Cytoplasmic side</orientation>
    </subcellularLocation>
</comment>
<comment type="similarity">
    <text evidence="1">In the N-terminal section; belongs to the complex I 30 kDa subunit family.</text>
</comment>
<comment type="similarity">
    <text evidence="1">In the C-terminal section; belongs to the complex I 49 kDa subunit family.</text>
</comment>
<accession>Q87ZQ7</accession>
<name>NUOCD_PSESM</name>
<gene>
    <name evidence="1" type="primary">nuoC</name>
    <name evidence="1" type="synonym">nuoCD</name>
    <name evidence="1" type="synonym">nuoD</name>
    <name type="ordered locus">PSPTO_3367</name>
</gene>
<evidence type="ECO:0000255" key="1">
    <source>
        <dbReference type="HAMAP-Rule" id="MF_01359"/>
    </source>
</evidence>
<protein>
    <recommendedName>
        <fullName evidence="1">NADH-quinone oxidoreductase subunit C/D</fullName>
        <ecNumber evidence="1">7.1.1.-</ecNumber>
    </recommendedName>
    <alternativeName>
        <fullName evidence="1">NADH dehydrogenase I subunit C/D</fullName>
    </alternativeName>
    <alternativeName>
        <fullName evidence="1">NDH-1 subunit C/D</fullName>
    </alternativeName>
</protein>
<reference key="1">
    <citation type="journal article" date="2003" name="Proc. Natl. Acad. Sci. U.S.A.">
        <title>The complete genome sequence of the Arabidopsis and tomato pathogen Pseudomonas syringae pv. tomato DC3000.</title>
        <authorList>
            <person name="Buell C.R."/>
            <person name="Joardar V."/>
            <person name="Lindeberg M."/>
            <person name="Selengut J."/>
            <person name="Paulsen I.T."/>
            <person name="Gwinn M.L."/>
            <person name="Dodson R.J."/>
            <person name="DeBoy R.T."/>
            <person name="Durkin A.S."/>
            <person name="Kolonay J.F."/>
            <person name="Madupu R."/>
            <person name="Daugherty S.C."/>
            <person name="Brinkac L.M."/>
            <person name="Beanan M.J."/>
            <person name="Haft D.H."/>
            <person name="Nelson W.C."/>
            <person name="Davidsen T.M."/>
            <person name="Zafar N."/>
            <person name="Zhou L."/>
            <person name="Liu J."/>
            <person name="Yuan Q."/>
            <person name="Khouri H.M."/>
            <person name="Fedorova N.B."/>
            <person name="Tran B."/>
            <person name="Russell D."/>
            <person name="Berry K.J."/>
            <person name="Utterback T.R."/>
            <person name="Van Aken S.E."/>
            <person name="Feldblyum T.V."/>
            <person name="D'Ascenzo M."/>
            <person name="Deng W.-L."/>
            <person name="Ramos A.R."/>
            <person name="Alfano J.R."/>
            <person name="Cartinhour S."/>
            <person name="Chatterjee A.K."/>
            <person name="Delaney T.P."/>
            <person name="Lazarowitz S.G."/>
            <person name="Martin G.B."/>
            <person name="Schneider D.J."/>
            <person name="Tang X."/>
            <person name="Bender C.L."/>
            <person name="White O."/>
            <person name="Fraser C.M."/>
            <person name="Collmer A."/>
        </authorList>
    </citation>
    <scope>NUCLEOTIDE SEQUENCE [LARGE SCALE GENOMIC DNA]</scope>
    <source>
        <strain>ATCC BAA-871 / DC3000</strain>
    </source>
</reference>
<dbReference type="EC" id="7.1.1.-" evidence="1"/>
<dbReference type="EMBL" id="AE016853">
    <property type="protein sequence ID" value="AAO56845.1"/>
    <property type="molecule type" value="Genomic_DNA"/>
</dbReference>
<dbReference type="RefSeq" id="NP_793150.1">
    <property type="nucleotide sequence ID" value="NC_004578.1"/>
</dbReference>
<dbReference type="RefSeq" id="WP_005619059.1">
    <property type="nucleotide sequence ID" value="NC_004578.1"/>
</dbReference>
<dbReference type="SMR" id="Q87ZQ7"/>
<dbReference type="STRING" id="223283.PSPTO_3367"/>
<dbReference type="GeneID" id="1185026"/>
<dbReference type="KEGG" id="pst:PSPTO_3367"/>
<dbReference type="PATRIC" id="fig|223283.9.peg.3447"/>
<dbReference type="eggNOG" id="COG0649">
    <property type="taxonomic scope" value="Bacteria"/>
</dbReference>
<dbReference type="eggNOG" id="COG0852">
    <property type="taxonomic scope" value="Bacteria"/>
</dbReference>
<dbReference type="HOGENOM" id="CLU_015134_3_2_6"/>
<dbReference type="OrthoDB" id="9801496at2"/>
<dbReference type="PhylomeDB" id="Q87ZQ7"/>
<dbReference type="Proteomes" id="UP000002515">
    <property type="component" value="Chromosome"/>
</dbReference>
<dbReference type="GO" id="GO:0030964">
    <property type="term" value="C:NADH dehydrogenase complex"/>
    <property type="evidence" value="ECO:0007669"/>
    <property type="project" value="InterPro"/>
</dbReference>
<dbReference type="GO" id="GO:0005886">
    <property type="term" value="C:plasma membrane"/>
    <property type="evidence" value="ECO:0007669"/>
    <property type="project" value="UniProtKB-SubCell"/>
</dbReference>
<dbReference type="GO" id="GO:0051287">
    <property type="term" value="F:NAD binding"/>
    <property type="evidence" value="ECO:0007669"/>
    <property type="project" value="InterPro"/>
</dbReference>
<dbReference type="GO" id="GO:0008137">
    <property type="term" value="F:NADH dehydrogenase (ubiquinone) activity"/>
    <property type="evidence" value="ECO:0007669"/>
    <property type="project" value="InterPro"/>
</dbReference>
<dbReference type="GO" id="GO:0050136">
    <property type="term" value="F:NADH:ubiquinone reductase (non-electrogenic) activity"/>
    <property type="evidence" value="ECO:0007669"/>
    <property type="project" value="UniProtKB-UniRule"/>
</dbReference>
<dbReference type="GO" id="GO:0048038">
    <property type="term" value="F:quinone binding"/>
    <property type="evidence" value="ECO:0007669"/>
    <property type="project" value="UniProtKB-KW"/>
</dbReference>
<dbReference type="FunFam" id="1.10.645.10:FF:000001">
    <property type="entry name" value="NADH-quinone oxidoreductase subunit C/D"/>
    <property type="match status" value="1"/>
</dbReference>
<dbReference type="FunFam" id="3.30.460.80:FF:000001">
    <property type="entry name" value="NADH-quinone oxidoreductase subunit C/D"/>
    <property type="match status" value="1"/>
</dbReference>
<dbReference type="Gene3D" id="1.10.645.10">
    <property type="entry name" value="Cytochrome-c3 Hydrogenase, chain B"/>
    <property type="match status" value="1"/>
</dbReference>
<dbReference type="Gene3D" id="3.30.460.80">
    <property type="entry name" value="NADH:ubiquinone oxidoreductase, 30kDa subunit"/>
    <property type="match status" value="1"/>
</dbReference>
<dbReference type="HAMAP" id="MF_01357">
    <property type="entry name" value="NDH1_NuoC"/>
    <property type="match status" value="1"/>
</dbReference>
<dbReference type="HAMAP" id="MF_01359">
    <property type="entry name" value="NDH1_NuoCD_1"/>
    <property type="match status" value="1"/>
</dbReference>
<dbReference type="HAMAP" id="MF_01358">
    <property type="entry name" value="NDH1_NuoD"/>
    <property type="match status" value="1"/>
</dbReference>
<dbReference type="InterPro" id="IPR010218">
    <property type="entry name" value="NADH_DH_suC"/>
</dbReference>
<dbReference type="InterPro" id="IPR023062">
    <property type="entry name" value="NADH_DH_suCD"/>
</dbReference>
<dbReference type="InterPro" id="IPR001135">
    <property type="entry name" value="NADH_Q_OxRdtase_suD"/>
</dbReference>
<dbReference type="InterPro" id="IPR037232">
    <property type="entry name" value="NADH_quin_OxRdtase_su_C/D-like"/>
</dbReference>
<dbReference type="InterPro" id="IPR001268">
    <property type="entry name" value="NADH_UbQ_OxRdtase_30kDa_su"/>
</dbReference>
<dbReference type="InterPro" id="IPR014029">
    <property type="entry name" value="NADH_UbQ_OxRdtase_49kDa_CS"/>
</dbReference>
<dbReference type="InterPro" id="IPR022885">
    <property type="entry name" value="NDH1_su_D/H"/>
</dbReference>
<dbReference type="InterPro" id="IPR029014">
    <property type="entry name" value="NiFe-Hase_large"/>
</dbReference>
<dbReference type="NCBIfam" id="TIGR01961">
    <property type="entry name" value="NuoC_fam"/>
    <property type="match status" value="1"/>
</dbReference>
<dbReference type="NCBIfam" id="TIGR01962">
    <property type="entry name" value="NuoD"/>
    <property type="match status" value="1"/>
</dbReference>
<dbReference type="NCBIfam" id="NF004739">
    <property type="entry name" value="PRK06075.1"/>
    <property type="match status" value="1"/>
</dbReference>
<dbReference type="NCBIfam" id="NF008728">
    <property type="entry name" value="PRK11742.1"/>
    <property type="match status" value="1"/>
</dbReference>
<dbReference type="PANTHER" id="PTHR11993:SF45">
    <property type="entry name" value="NADH-QUINONE OXIDOREDUCTASE SUBUNIT C_D"/>
    <property type="match status" value="1"/>
</dbReference>
<dbReference type="PANTHER" id="PTHR11993">
    <property type="entry name" value="NADH-UBIQUINONE OXIDOREDUCTASE 49 KDA SUBUNIT"/>
    <property type="match status" value="1"/>
</dbReference>
<dbReference type="Pfam" id="PF00329">
    <property type="entry name" value="Complex1_30kDa"/>
    <property type="match status" value="1"/>
</dbReference>
<dbReference type="Pfam" id="PF00346">
    <property type="entry name" value="Complex1_49kDa"/>
    <property type="match status" value="1"/>
</dbReference>
<dbReference type="SUPFAM" id="SSF56762">
    <property type="entry name" value="HydB/Nqo4-like"/>
    <property type="match status" value="1"/>
</dbReference>
<dbReference type="SUPFAM" id="SSF143243">
    <property type="entry name" value="Nqo5-like"/>
    <property type="match status" value="1"/>
</dbReference>
<dbReference type="PROSITE" id="PS00535">
    <property type="entry name" value="COMPLEX1_49K"/>
    <property type="match status" value="1"/>
</dbReference>